<feature type="chain" id="PRO_0000177217" description="Large ribosomal subunit protein bL20">
    <location>
        <begin position="1"/>
        <end position="117"/>
    </location>
</feature>
<evidence type="ECO:0000250" key="1"/>
<evidence type="ECO:0000305" key="2"/>
<keyword id="KW-1185">Reference proteome</keyword>
<keyword id="KW-0687">Ribonucleoprotein</keyword>
<keyword id="KW-0689">Ribosomal protein</keyword>
<keyword id="KW-0694">RNA-binding</keyword>
<keyword id="KW-0699">rRNA-binding</keyword>
<proteinExistence type="inferred from homology"/>
<accession>Q9ZCV0</accession>
<reference key="1">
    <citation type="journal article" date="1998" name="Nature">
        <title>The genome sequence of Rickettsia prowazekii and the origin of mitochondria.</title>
        <authorList>
            <person name="Andersson S.G.E."/>
            <person name="Zomorodipour A."/>
            <person name="Andersson J.O."/>
            <person name="Sicheritz-Ponten T."/>
            <person name="Alsmark U.C.M."/>
            <person name="Podowski R.M."/>
            <person name="Naeslund A.K."/>
            <person name="Eriksson A.-S."/>
            <person name="Winkler H.H."/>
            <person name="Kurland C.G."/>
        </authorList>
    </citation>
    <scope>NUCLEOTIDE SEQUENCE [LARGE SCALE GENOMIC DNA]</scope>
    <source>
        <strain>Madrid E</strain>
    </source>
</reference>
<name>RL20_RICPR</name>
<dbReference type="EMBL" id="AJ235272">
    <property type="protein sequence ID" value="CAA15053.1"/>
    <property type="molecule type" value="Genomic_DNA"/>
</dbReference>
<dbReference type="PIR" id="C71666">
    <property type="entry name" value="C71666"/>
</dbReference>
<dbReference type="RefSeq" id="NP_220977.1">
    <property type="nucleotide sequence ID" value="NC_000963.1"/>
</dbReference>
<dbReference type="RefSeq" id="WP_004597959.1">
    <property type="nucleotide sequence ID" value="NC_000963.1"/>
</dbReference>
<dbReference type="SMR" id="Q9ZCV0"/>
<dbReference type="STRING" id="272947.gene:17555688"/>
<dbReference type="EnsemblBacteria" id="CAA15053">
    <property type="protein sequence ID" value="CAA15053"/>
    <property type="gene ID" value="CAA15053"/>
</dbReference>
<dbReference type="GeneID" id="57569734"/>
<dbReference type="KEGG" id="rpr:RP609"/>
<dbReference type="PATRIC" id="fig|272947.5.peg.628"/>
<dbReference type="eggNOG" id="COG0292">
    <property type="taxonomic scope" value="Bacteria"/>
</dbReference>
<dbReference type="HOGENOM" id="CLU_123265_0_1_5"/>
<dbReference type="OrthoDB" id="9808966at2"/>
<dbReference type="Proteomes" id="UP000002480">
    <property type="component" value="Chromosome"/>
</dbReference>
<dbReference type="GO" id="GO:1990904">
    <property type="term" value="C:ribonucleoprotein complex"/>
    <property type="evidence" value="ECO:0007669"/>
    <property type="project" value="UniProtKB-KW"/>
</dbReference>
<dbReference type="GO" id="GO:0005840">
    <property type="term" value="C:ribosome"/>
    <property type="evidence" value="ECO:0007669"/>
    <property type="project" value="UniProtKB-KW"/>
</dbReference>
<dbReference type="GO" id="GO:0019843">
    <property type="term" value="F:rRNA binding"/>
    <property type="evidence" value="ECO:0007669"/>
    <property type="project" value="UniProtKB-UniRule"/>
</dbReference>
<dbReference type="GO" id="GO:0003735">
    <property type="term" value="F:structural constituent of ribosome"/>
    <property type="evidence" value="ECO:0007669"/>
    <property type="project" value="InterPro"/>
</dbReference>
<dbReference type="GO" id="GO:0000027">
    <property type="term" value="P:ribosomal large subunit assembly"/>
    <property type="evidence" value="ECO:0007669"/>
    <property type="project" value="UniProtKB-UniRule"/>
</dbReference>
<dbReference type="GO" id="GO:0006412">
    <property type="term" value="P:translation"/>
    <property type="evidence" value="ECO:0007669"/>
    <property type="project" value="InterPro"/>
</dbReference>
<dbReference type="CDD" id="cd07026">
    <property type="entry name" value="Ribosomal_L20"/>
    <property type="match status" value="1"/>
</dbReference>
<dbReference type="FunFam" id="1.10.1900.20:FF:000001">
    <property type="entry name" value="50S ribosomal protein L20"/>
    <property type="match status" value="1"/>
</dbReference>
<dbReference type="Gene3D" id="6.10.160.10">
    <property type="match status" value="1"/>
</dbReference>
<dbReference type="Gene3D" id="1.10.1900.20">
    <property type="entry name" value="Ribosomal protein L20"/>
    <property type="match status" value="1"/>
</dbReference>
<dbReference type="HAMAP" id="MF_00382">
    <property type="entry name" value="Ribosomal_bL20"/>
    <property type="match status" value="1"/>
</dbReference>
<dbReference type="InterPro" id="IPR005813">
    <property type="entry name" value="Ribosomal_bL20"/>
</dbReference>
<dbReference type="InterPro" id="IPR049946">
    <property type="entry name" value="RIBOSOMAL_L20_CS"/>
</dbReference>
<dbReference type="InterPro" id="IPR035566">
    <property type="entry name" value="Ribosomal_protein_bL20_C"/>
</dbReference>
<dbReference type="NCBIfam" id="TIGR01032">
    <property type="entry name" value="rplT_bact"/>
    <property type="match status" value="1"/>
</dbReference>
<dbReference type="PANTHER" id="PTHR10986">
    <property type="entry name" value="39S RIBOSOMAL PROTEIN L20"/>
    <property type="match status" value="1"/>
</dbReference>
<dbReference type="Pfam" id="PF00453">
    <property type="entry name" value="Ribosomal_L20"/>
    <property type="match status" value="1"/>
</dbReference>
<dbReference type="PRINTS" id="PR00062">
    <property type="entry name" value="RIBOSOMALL20"/>
</dbReference>
<dbReference type="SUPFAM" id="SSF74731">
    <property type="entry name" value="Ribosomal protein L20"/>
    <property type="match status" value="1"/>
</dbReference>
<dbReference type="PROSITE" id="PS00937">
    <property type="entry name" value="RIBOSOMAL_L20"/>
    <property type="match status" value="1"/>
</dbReference>
<comment type="function">
    <text evidence="1">Binds directly to 23S ribosomal RNA and is necessary for the in vitro assembly process of the 50S ribosomal subunit. It is not involved in the protein synthesizing functions of that subunit (By similarity).</text>
</comment>
<comment type="similarity">
    <text evidence="2">Belongs to the bacterial ribosomal protein bL20 family.</text>
</comment>
<sequence>MTRAKSGKISKKRHKKILKLAKGYRGRANNCFRVAIEKVEKGLQYAYRDRRNRKRDFRGLWIQRINAAVREHGLIYSQFMGALKKAGINIDRKVLAELAVNNNDGFASIVQQSKAHI</sequence>
<protein>
    <recommendedName>
        <fullName evidence="2">Large ribosomal subunit protein bL20</fullName>
    </recommendedName>
    <alternativeName>
        <fullName>50S ribosomal protein L20</fullName>
    </alternativeName>
</protein>
<organism>
    <name type="scientific">Rickettsia prowazekii (strain Madrid E)</name>
    <dbReference type="NCBI Taxonomy" id="272947"/>
    <lineage>
        <taxon>Bacteria</taxon>
        <taxon>Pseudomonadati</taxon>
        <taxon>Pseudomonadota</taxon>
        <taxon>Alphaproteobacteria</taxon>
        <taxon>Rickettsiales</taxon>
        <taxon>Rickettsiaceae</taxon>
        <taxon>Rickettsieae</taxon>
        <taxon>Rickettsia</taxon>
        <taxon>typhus group</taxon>
    </lineage>
</organism>
<gene>
    <name type="primary">rplT</name>
    <name type="ordered locus">RP609</name>
</gene>